<accession>Q9DGJ2</accession>
<reference key="1">
    <citation type="journal article" date="2001" name="Am. J. Physiol.">
        <title>Oxygen affinity and amino acid sequence of myoglobins from endothermic and ectothermic fish.</title>
        <authorList>
            <person name="Marcinek D.J."/>
            <person name="Bonaventura J."/>
            <person name="Wittenberg J.B."/>
            <person name="Block B.A."/>
        </authorList>
    </citation>
    <scope>NUCLEOTIDE SEQUENCE [MRNA]</scope>
    <source>
        <tissue>Skeletal muscle</tissue>
    </source>
</reference>
<keyword id="KW-0963">Cytoplasm</keyword>
<keyword id="KW-0349">Heme</keyword>
<keyword id="KW-0408">Iron</keyword>
<keyword id="KW-0479">Metal-binding</keyword>
<keyword id="KW-0514">Muscle protein</keyword>
<keyword id="KW-0560">Oxidoreductase</keyword>
<keyword id="KW-0561">Oxygen transport</keyword>
<keyword id="KW-0813">Transport</keyword>
<protein>
    <recommendedName>
        <fullName>Myoglobin</fullName>
    </recommendedName>
    <alternativeName>
        <fullName evidence="2">Nitrite reductase MB</fullName>
        <ecNumber evidence="2">1.7.-.-</ecNumber>
    </alternativeName>
    <alternativeName>
        <fullName evidence="2">Pseudoperoxidase MB</fullName>
        <ecNumber evidence="2">1.11.1.-</ecNumber>
    </alternativeName>
</protein>
<sequence>MADFDAVLKCWGPVEADYTTIGGLVLTRLFKEHPDTQKLFPKFAGIAQADLAGNAAISAHGATVLKKLGELLKAKGSHASILKPMANSHATKHKIPINNFKLISEVLVKVMQEKAGLDAGGQTALRNVMGIIIADLEANYKELGFTG</sequence>
<proteinExistence type="evidence at transcript level"/>
<name>MYG_THUAA</name>
<feature type="initiator methionine" description="Removed" evidence="1">
    <location>
        <position position="1"/>
    </location>
</feature>
<feature type="chain" id="PRO_0000053374" description="Myoglobin">
    <location>
        <begin position="2"/>
        <end position="147"/>
    </location>
</feature>
<feature type="domain" description="Globin" evidence="6">
    <location>
        <begin position="2"/>
        <end position="141"/>
    </location>
</feature>
<feature type="binding site" evidence="5">
    <location>
        <position position="60"/>
    </location>
    <ligand>
        <name>nitrite</name>
        <dbReference type="ChEBI" id="CHEBI:16301"/>
    </ligand>
</feature>
<feature type="binding site" evidence="4 6">
    <location>
        <position position="60"/>
    </location>
    <ligand>
        <name>O2</name>
        <dbReference type="ChEBI" id="CHEBI:15379"/>
    </ligand>
</feature>
<feature type="binding site" description="proximal binding residue" evidence="2">
    <location>
        <position position="89"/>
    </location>
    <ligand>
        <name>heme b</name>
        <dbReference type="ChEBI" id="CHEBI:60344"/>
    </ligand>
    <ligandPart>
        <name>Fe</name>
        <dbReference type="ChEBI" id="CHEBI:18248"/>
    </ligandPart>
</feature>
<comment type="function">
    <text evidence="2">Monomeric heme protein which primary function is to store oxygen and facilitate its diffusion within muscle tissues. Reversibly binds oxygen through a pentacoordinated heme iron and enables its timely and efficient release as needed during periods of heightened demand. Depending on the oxidative conditions of tissues and cells, and in addition to its ability to bind oxygen, it also has a nitrite reductase activity whereby it regulates the production of bioactive nitric oxide. Under stress conditions, like hypoxia and anoxia, it also protects cells against reactive oxygen species thanks to its pseudoperoxidase activity.</text>
</comment>
<comment type="catalytic activity">
    <reaction evidence="2">
        <text>Fe(III)-heme b-[protein] + nitric oxide + H2O = Fe(II)-heme b-[protein] + nitrite + 2 H(+)</text>
        <dbReference type="Rhea" id="RHEA:77711"/>
        <dbReference type="Rhea" id="RHEA-COMP:18975"/>
        <dbReference type="Rhea" id="RHEA-COMP:18976"/>
        <dbReference type="ChEBI" id="CHEBI:15377"/>
        <dbReference type="ChEBI" id="CHEBI:15378"/>
        <dbReference type="ChEBI" id="CHEBI:16301"/>
        <dbReference type="ChEBI" id="CHEBI:16480"/>
        <dbReference type="ChEBI" id="CHEBI:55376"/>
        <dbReference type="ChEBI" id="CHEBI:60344"/>
    </reaction>
    <physiologicalReaction direction="right-to-left" evidence="2">
        <dbReference type="Rhea" id="RHEA:77713"/>
    </physiologicalReaction>
</comment>
<comment type="catalytic activity">
    <reaction evidence="2">
        <text>H2O2 + AH2 = A + 2 H2O</text>
        <dbReference type="Rhea" id="RHEA:30275"/>
        <dbReference type="ChEBI" id="CHEBI:13193"/>
        <dbReference type="ChEBI" id="CHEBI:15377"/>
        <dbReference type="ChEBI" id="CHEBI:16240"/>
        <dbReference type="ChEBI" id="CHEBI:17499"/>
    </reaction>
</comment>
<comment type="subunit">
    <text evidence="3">Monomeric.</text>
</comment>
<comment type="subcellular location">
    <subcellularLocation>
        <location evidence="2">Cytoplasm</location>
        <location evidence="2">Sarcoplasm</location>
    </subcellularLocation>
</comment>
<comment type="similarity">
    <text evidence="6">Belongs to the globin family.</text>
</comment>
<evidence type="ECO:0000250" key="1"/>
<evidence type="ECO:0000250" key="2">
    <source>
        <dbReference type="UniProtKB" id="P02144"/>
    </source>
</evidence>
<evidence type="ECO:0000250" key="3">
    <source>
        <dbReference type="UniProtKB" id="P02185"/>
    </source>
</evidence>
<evidence type="ECO:0000250" key="4">
    <source>
        <dbReference type="UniProtKB" id="P02189"/>
    </source>
</evidence>
<evidence type="ECO:0000250" key="5">
    <source>
        <dbReference type="UniProtKB" id="P68082"/>
    </source>
</evidence>
<evidence type="ECO:0000255" key="6">
    <source>
        <dbReference type="PROSITE-ProRule" id="PRU00238"/>
    </source>
</evidence>
<gene>
    <name type="primary">mb</name>
</gene>
<dbReference type="EC" id="1.7.-.-" evidence="2"/>
<dbReference type="EC" id="1.11.1.-" evidence="2"/>
<dbReference type="EMBL" id="AF291832">
    <property type="protein sequence ID" value="AAG02106.1"/>
    <property type="molecule type" value="mRNA"/>
</dbReference>
<dbReference type="SMR" id="Q9DGJ2"/>
<dbReference type="GO" id="GO:0070062">
    <property type="term" value="C:extracellular exosome"/>
    <property type="evidence" value="ECO:0007669"/>
    <property type="project" value="TreeGrafter"/>
</dbReference>
<dbReference type="GO" id="GO:0016528">
    <property type="term" value="C:sarcoplasm"/>
    <property type="evidence" value="ECO:0000250"/>
    <property type="project" value="UniProtKB"/>
</dbReference>
<dbReference type="GO" id="GO:0020037">
    <property type="term" value="F:heme binding"/>
    <property type="evidence" value="ECO:0007669"/>
    <property type="project" value="InterPro"/>
</dbReference>
<dbReference type="GO" id="GO:0046872">
    <property type="term" value="F:metal ion binding"/>
    <property type="evidence" value="ECO:0007669"/>
    <property type="project" value="UniProtKB-KW"/>
</dbReference>
<dbReference type="GO" id="GO:0098809">
    <property type="term" value="F:nitrite reductase activity"/>
    <property type="evidence" value="ECO:0000250"/>
    <property type="project" value="UniProtKB"/>
</dbReference>
<dbReference type="GO" id="GO:0019825">
    <property type="term" value="F:oxygen binding"/>
    <property type="evidence" value="ECO:0007669"/>
    <property type="project" value="InterPro"/>
</dbReference>
<dbReference type="GO" id="GO:0005344">
    <property type="term" value="F:oxygen carrier activity"/>
    <property type="evidence" value="ECO:0000250"/>
    <property type="project" value="UniProtKB"/>
</dbReference>
<dbReference type="GO" id="GO:0004601">
    <property type="term" value="F:peroxidase activity"/>
    <property type="evidence" value="ECO:0000250"/>
    <property type="project" value="UniProtKB"/>
</dbReference>
<dbReference type="GO" id="GO:0019430">
    <property type="term" value="P:removal of superoxide radicals"/>
    <property type="evidence" value="ECO:0000250"/>
    <property type="project" value="UniProtKB"/>
</dbReference>
<dbReference type="Gene3D" id="6.10.140.2100">
    <property type="match status" value="1"/>
</dbReference>
<dbReference type="Gene3D" id="6.10.140.2110">
    <property type="match status" value="1"/>
</dbReference>
<dbReference type="InterPro" id="IPR000971">
    <property type="entry name" value="Globin"/>
</dbReference>
<dbReference type="InterPro" id="IPR009050">
    <property type="entry name" value="Globin-like_sf"/>
</dbReference>
<dbReference type="InterPro" id="IPR002335">
    <property type="entry name" value="Myoglobin"/>
</dbReference>
<dbReference type="PANTHER" id="PTHR47132">
    <property type="entry name" value="MYOGLOBIN"/>
    <property type="match status" value="1"/>
</dbReference>
<dbReference type="PANTHER" id="PTHR47132:SF1">
    <property type="entry name" value="MYOGLOBIN"/>
    <property type="match status" value="1"/>
</dbReference>
<dbReference type="Pfam" id="PF00042">
    <property type="entry name" value="Globin"/>
    <property type="match status" value="1"/>
</dbReference>
<dbReference type="PRINTS" id="PR00613">
    <property type="entry name" value="MYOGLOBIN"/>
</dbReference>
<dbReference type="SUPFAM" id="SSF46458">
    <property type="entry name" value="Globin-like"/>
    <property type="match status" value="1"/>
</dbReference>
<dbReference type="PROSITE" id="PS01033">
    <property type="entry name" value="GLOBIN"/>
    <property type="match status" value="1"/>
</dbReference>
<organism>
    <name type="scientific">Thunnus alalunga</name>
    <name type="common">Albacore</name>
    <name type="synonym">Scomber alalunga</name>
    <dbReference type="NCBI Taxonomy" id="8235"/>
    <lineage>
        <taxon>Eukaryota</taxon>
        <taxon>Metazoa</taxon>
        <taxon>Chordata</taxon>
        <taxon>Craniata</taxon>
        <taxon>Vertebrata</taxon>
        <taxon>Euteleostomi</taxon>
        <taxon>Actinopterygii</taxon>
        <taxon>Neopterygii</taxon>
        <taxon>Teleostei</taxon>
        <taxon>Neoteleostei</taxon>
        <taxon>Acanthomorphata</taxon>
        <taxon>Pelagiaria</taxon>
        <taxon>Scombriformes</taxon>
        <taxon>Scombridae</taxon>
        <taxon>Thunnus</taxon>
    </lineage>
</organism>